<sequence>MSQAAETLDGWYSLHLFYAVDWASLRIVPKDERDALVTEFQSFLENTATVRSSKSGDQAIYNITGQKADLLLWFLRPEMKSLNHIENEFNKLRIADFLIPTYSYVSVIELSNYLAGKSDEDPYENPHIKARLYPELPHSDYICFYPMNKRRNETYNWYMLTMEERQKLMYDHGMIGRKYAGKIKQFITGSVGFDDFEWGVTLFSDDVLQFKKIVYEMRFDETTARYGEFGSFFVGHIINTNEFDQFFAIS</sequence>
<gene>
    <name evidence="1" type="primary">chdC</name>
    <name type="ordered locus">USA300HOU_0580</name>
</gene>
<organism>
    <name type="scientific">Staphylococcus aureus (strain USA300 / TCH1516)</name>
    <dbReference type="NCBI Taxonomy" id="451516"/>
    <lineage>
        <taxon>Bacteria</taxon>
        <taxon>Bacillati</taxon>
        <taxon>Bacillota</taxon>
        <taxon>Bacilli</taxon>
        <taxon>Bacillales</taxon>
        <taxon>Staphylococcaceae</taxon>
        <taxon>Staphylococcus</taxon>
    </lineage>
</organism>
<protein>
    <recommendedName>
        <fullName evidence="1">Coproheme decarboxylase</fullName>
        <ecNumber evidence="1">1.3.98.5</ecNumber>
    </recommendedName>
    <alternativeName>
        <fullName evidence="1">Coproheme III oxidative decarboxylase</fullName>
    </alternativeName>
    <alternativeName>
        <fullName evidence="1">Hydrogen peroxide-dependent heme synthase</fullName>
    </alternativeName>
</protein>
<accession>A8YZT4</accession>
<reference key="1">
    <citation type="journal article" date="2007" name="BMC Microbiol.">
        <title>Subtle genetic changes enhance virulence of methicillin resistant and sensitive Staphylococcus aureus.</title>
        <authorList>
            <person name="Highlander S.K."/>
            <person name="Hulten K.G."/>
            <person name="Qin X."/>
            <person name="Jiang H."/>
            <person name="Yerrapragada S."/>
            <person name="Mason E.O. Jr."/>
            <person name="Shang Y."/>
            <person name="Williams T.M."/>
            <person name="Fortunov R.M."/>
            <person name="Liu Y."/>
            <person name="Igboeli O."/>
            <person name="Petrosino J."/>
            <person name="Tirumalai M."/>
            <person name="Uzman A."/>
            <person name="Fox G.E."/>
            <person name="Cardenas A.M."/>
            <person name="Muzny D.M."/>
            <person name="Hemphill L."/>
            <person name="Ding Y."/>
            <person name="Dugan S."/>
            <person name="Blyth P.R."/>
            <person name="Buhay C.J."/>
            <person name="Dinh H.H."/>
            <person name="Hawes A.C."/>
            <person name="Holder M."/>
            <person name="Kovar C.L."/>
            <person name="Lee S.L."/>
            <person name="Liu W."/>
            <person name="Nazareth L.V."/>
            <person name="Wang Q."/>
            <person name="Zhou J."/>
            <person name="Kaplan S.L."/>
            <person name="Weinstock G.M."/>
        </authorList>
    </citation>
    <scope>NUCLEOTIDE SEQUENCE [LARGE SCALE GENOMIC DNA]</scope>
    <source>
        <strain>USA300 / TCH1516</strain>
    </source>
</reference>
<dbReference type="EC" id="1.3.98.5" evidence="1"/>
<dbReference type="EMBL" id="CP000730">
    <property type="protein sequence ID" value="ABX28606.1"/>
    <property type="molecule type" value="Genomic_DNA"/>
</dbReference>
<dbReference type="SMR" id="A8YZT4"/>
<dbReference type="KEGG" id="sax:USA300HOU_0580"/>
<dbReference type="HOGENOM" id="CLU_063226_1_0_9"/>
<dbReference type="BioCyc" id="SAUR451516-HMP:GTV5-598-MONOMER"/>
<dbReference type="UniPathway" id="UPA00252"/>
<dbReference type="GO" id="GO:0020037">
    <property type="term" value="F:heme binding"/>
    <property type="evidence" value="ECO:0007669"/>
    <property type="project" value="InterPro"/>
</dbReference>
<dbReference type="GO" id="GO:0046872">
    <property type="term" value="F:metal ion binding"/>
    <property type="evidence" value="ECO:0007669"/>
    <property type="project" value="UniProtKB-KW"/>
</dbReference>
<dbReference type="GO" id="GO:0016634">
    <property type="term" value="F:oxidoreductase activity, acting on the CH-CH group of donors, oxygen as acceptor"/>
    <property type="evidence" value="ECO:0007669"/>
    <property type="project" value="UniProtKB-UniRule"/>
</dbReference>
<dbReference type="GO" id="GO:0004601">
    <property type="term" value="F:peroxidase activity"/>
    <property type="evidence" value="ECO:0007669"/>
    <property type="project" value="InterPro"/>
</dbReference>
<dbReference type="GO" id="GO:0006785">
    <property type="term" value="P:heme B biosynthetic process"/>
    <property type="evidence" value="ECO:0007669"/>
    <property type="project" value="UniProtKB-UniRule"/>
</dbReference>
<dbReference type="Gene3D" id="3.30.70.1030">
    <property type="entry name" value="Apc35880, domain 1"/>
    <property type="match status" value="2"/>
</dbReference>
<dbReference type="HAMAP" id="MF_01442">
    <property type="entry name" value="Coproheme_decarbox_1"/>
    <property type="match status" value="1"/>
</dbReference>
<dbReference type="InterPro" id="IPR031332">
    <property type="entry name" value="CHDC"/>
</dbReference>
<dbReference type="InterPro" id="IPR010644">
    <property type="entry name" value="ChdC/CLD"/>
</dbReference>
<dbReference type="InterPro" id="IPR011008">
    <property type="entry name" value="Dimeric_a/b-barrel"/>
</dbReference>
<dbReference type="NCBIfam" id="NF008913">
    <property type="entry name" value="PRK12276.1"/>
    <property type="match status" value="1"/>
</dbReference>
<dbReference type="PANTHER" id="PTHR36843:SF1">
    <property type="entry name" value="COPROHEME DECARBOXYLASE"/>
    <property type="match status" value="1"/>
</dbReference>
<dbReference type="PANTHER" id="PTHR36843">
    <property type="entry name" value="HEME-DEPENDENT PEROXIDASE YWFI-RELATED"/>
    <property type="match status" value="1"/>
</dbReference>
<dbReference type="Pfam" id="PF06778">
    <property type="entry name" value="Chlor_dismutase"/>
    <property type="match status" value="1"/>
</dbReference>
<dbReference type="SUPFAM" id="SSF54909">
    <property type="entry name" value="Dimeric alpha+beta barrel"/>
    <property type="match status" value="1"/>
</dbReference>
<evidence type="ECO:0000255" key="1">
    <source>
        <dbReference type="HAMAP-Rule" id="MF_01442"/>
    </source>
</evidence>
<keyword id="KW-0349">Heme</keyword>
<keyword id="KW-0350">Heme biosynthesis</keyword>
<keyword id="KW-0408">Iron</keyword>
<keyword id="KW-0479">Metal-binding</keyword>
<keyword id="KW-0560">Oxidoreductase</keyword>
<feature type="chain" id="PRO_1000087459" description="Coproheme decarboxylase">
    <location>
        <begin position="1"/>
        <end position="250"/>
    </location>
</feature>
<feature type="active site" evidence="1">
    <location>
        <position position="145"/>
    </location>
</feature>
<feature type="binding site" evidence="1">
    <location>
        <position position="131"/>
    </location>
    <ligand>
        <name>Fe-coproporphyrin III</name>
        <dbReference type="ChEBI" id="CHEBI:68438"/>
    </ligand>
</feature>
<feature type="binding site" evidence="1">
    <location>
        <begin position="145"/>
        <end position="149"/>
    </location>
    <ligand>
        <name>Fe-coproporphyrin III</name>
        <dbReference type="ChEBI" id="CHEBI:68438"/>
    </ligand>
</feature>
<feature type="binding site" description="axial binding residue" evidence="1">
    <location>
        <position position="172"/>
    </location>
    <ligand>
        <name>Fe-coproporphyrin III</name>
        <dbReference type="ChEBI" id="CHEBI:68438"/>
    </ligand>
    <ligandPart>
        <name>Fe</name>
        <dbReference type="ChEBI" id="CHEBI:18248"/>
    </ligandPart>
</feature>
<feature type="binding site" evidence="1">
    <location>
        <position position="185"/>
    </location>
    <ligand>
        <name>Fe-coproporphyrin III</name>
        <dbReference type="ChEBI" id="CHEBI:68438"/>
    </ligand>
</feature>
<comment type="function">
    <text evidence="1">Involved in coproporphyrin-dependent heme b biosynthesis. Catalyzes the decarboxylation of Fe-coproporphyrin III (coproheme) to heme b (protoheme IX), the last step of the pathway. The reaction occurs in a stepwise manner with a three-propionate intermediate.</text>
</comment>
<comment type="catalytic activity">
    <reaction evidence="1">
        <text>Fe-coproporphyrin III + 2 H2O2 + 2 H(+) = heme b + 2 CO2 + 4 H2O</text>
        <dbReference type="Rhea" id="RHEA:56516"/>
        <dbReference type="ChEBI" id="CHEBI:15377"/>
        <dbReference type="ChEBI" id="CHEBI:15378"/>
        <dbReference type="ChEBI" id="CHEBI:16240"/>
        <dbReference type="ChEBI" id="CHEBI:16526"/>
        <dbReference type="ChEBI" id="CHEBI:60344"/>
        <dbReference type="ChEBI" id="CHEBI:68438"/>
        <dbReference type="EC" id="1.3.98.5"/>
    </reaction>
    <physiologicalReaction direction="left-to-right" evidence="1">
        <dbReference type="Rhea" id="RHEA:56517"/>
    </physiologicalReaction>
</comment>
<comment type="catalytic activity">
    <reaction evidence="1">
        <text>Fe-coproporphyrin III + H2O2 + H(+) = harderoheme III + CO2 + 2 H2O</text>
        <dbReference type="Rhea" id="RHEA:57940"/>
        <dbReference type="ChEBI" id="CHEBI:15377"/>
        <dbReference type="ChEBI" id="CHEBI:15378"/>
        <dbReference type="ChEBI" id="CHEBI:16240"/>
        <dbReference type="ChEBI" id="CHEBI:16526"/>
        <dbReference type="ChEBI" id="CHEBI:68438"/>
        <dbReference type="ChEBI" id="CHEBI:142463"/>
    </reaction>
    <physiologicalReaction direction="left-to-right" evidence="1">
        <dbReference type="Rhea" id="RHEA:57941"/>
    </physiologicalReaction>
</comment>
<comment type="catalytic activity">
    <reaction evidence="1">
        <text>harderoheme III + H2O2 + H(+) = heme b + CO2 + 2 H2O</text>
        <dbReference type="Rhea" id="RHEA:57944"/>
        <dbReference type="ChEBI" id="CHEBI:15377"/>
        <dbReference type="ChEBI" id="CHEBI:15378"/>
        <dbReference type="ChEBI" id="CHEBI:16240"/>
        <dbReference type="ChEBI" id="CHEBI:16526"/>
        <dbReference type="ChEBI" id="CHEBI:60344"/>
        <dbReference type="ChEBI" id="CHEBI:142463"/>
    </reaction>
    <physiologicalReaction direction="left-to-right" evidence="1">
        <dbReference type="Rhea" id="RHEA:57945"/>
    </physiologicalReaction>
</comment>
<comment type="cofactor">
    <cofactor evidence="1">
        <name>Fe-coproporphyrin III</name>
        <dbReference type="ChEBI" id="CHEBI:68438"/>
    </cofactor>
    <text evidence="1">Fe-coproporphyrin III acts both as a substrate and a redox cofactor.</text>
</comment>
<comment type="pathway">
    <text evidence="1">Porphyrin-containing compound metabolism; protoheme biosynthesis.</text>
</comment>
<comment type="similarity">
    <text evidence="1">Belongs to the ChdC family. Type 1 subfamily.</text>
</comment>
<name>CHDC_STAAT</name>
<proteinExistence type="inferred from homology"/>